<protein>
    <recommendedName>
        <fullName evidence="1">Probable glycine dehydrogenase (decarboxylating) subunit 2</fullName>
        <ecNumber evidence="1">1.4.4.2</ecNumber>
    </recommendedName>
    <alternativeName>
        <fullName evidence="1">Glycine cleavage system P-protein subunit 2</fullName>
    </alternativeName>
    <alternativeName>
        <fullName evidence="1">Glycine decarboxylase subunit 2</fullName>
    </alternativeName>
    <alternativeName>
        <fullName evidence="1">Glycine dehydrogenase (aminomethyl-transferring) subunit 2</fullName>
    </alternativeName>
</protein>
<evidence type="ECO:0000255" key="1">
    <source>
        <dbReference type="HAMAP-Rule" id="MF_00713"/>
    </source>
</evidence>
<proteinExistence type="inferred from homology"/>
<reference key="1">
    <citation type="journal article" date="2007" name="J. Bacteriol.">
        <title>The complete genome sequence of Bacillus thuringiensis Al Hakam.</title>
        <authorList>
            <person name="Challacombe J.F."/>
            <person name="Altherr M.R."/>
            <person name="Xie G."/>
            <person name="Bhotika S.S."/>
            <person name="Brown N."/>
            <person name="Bruce D."/>
            <person name="Campbell C.S."/>
            <person name="Campbell M.L."/>
            <person name="Chen J."/>
            <person name="Chertkov O."/>
            <person name="Cleland C."/>
            <person name="Dimitrijevic M."/>
            <person name="Doggett N.A."/>
            <person name="Fawcett J.J."/>
            <person name="Glavina T."/>
            <person name="Goodwin L.A."/>
            <person name="Green L.D."/>
            <person name="Han C.S."/>
            <person name="Hill K.K."/>
            <person name="Hitchcock P."/>
            <person name="Jackson P.J."/>
            <person name="Keim P."/>
            <person name="Kewalramani A.R."/>
            <person name="Longmire J."/>
            <person name="Lucas S."/>
            <person name="Malfatti S."/>
            <person name="Martinez D."/>
            <person name="McMurry K."/>
            <person name="Meincke L.J."/>
            <person name="Misra M."/>
            <person name="Moseman B.L."/>
            <person name="Mundt M."/>
            <person name="Munk A.C."/>
            <person name="Okinaka R.T."/>
            <person name="Parson-Quintana B."/>
            <person name="Reilly L.P."/>
            <person name="Richardson P."/>
            <person name="Robinson D.L."/>
            <person name="Saunders E."/>
            <person name="Tapia R."/>
            <person name="Tesmer J.G."/>
            <person name="Thayer N."/>
            <person name="Thompson L.S."/>
            <person name="Tice H."/>
            <person name="Ticknor L.O."/>
            <person name="Wills P.L."/>
            <person name="Gilna P."/>
            <person name="Brettin T.S."/>
        </authorList>
    </citation>
    <scope>NUCLEOTIDE SEQUENCE [LARGE SCALE GENOMIC DNA]</scope>
    <source>
        <strain>Al Hakam</strain>
    </source>
</reference>
<keyword id="KW-0560">Oxidoreductase</keyword>
<keyword id="KW-0663">Pyridoxal phosphate</keyword>
<name>GCSPB_BACAH</name>
<accession>A0RIK9</accession>
<gene>
    <name evidence="1" type="primary">gcvPB</name>
    <name type="ordered locus">BALH_3827</name>
</gene>
<feature type="chain" id="PRO_1000045687" description="Probable glycine dehydrogenase (decarboxylating) subunit 2">
    <location>
        <begin position="1"/>
        <end position="491"/>
    </location>
</feature>
<feature type="modified residue" description="N6-(pyridoxal phosphate)lysine" evidence="1">
    <location>
        <position position="273"/>
    </location>
</feature>
<dbReference type="EC" id="1.4.4.2" evidence="1"/>
<dbReference type="EMBL" id="CP000485">
    <property type="protein sequence ID" value="ABK87052.1"/>
    <property type="molecule type" value="Genomic_DNA"/>
</dbReference>
<dbReference type="RefSeq" id="WP_000795694.1">
    <property type="nucleotide sequence ID" value="NC_008600.1"/>
</dbReference>
<dbReference type="SMR" id="A0RIK9"/>
<dbReference type="KEGG" id="btl:BALH_3827"/>
<dbReference type="HOGENOM" id="CLU_004620_5_0_9"/>
<dbReference type="GO" id="GO:0005829">
    <property type="term" value="C:cytosol"/>
    <property type="evidence" value="ECO:0007669"/>
    <property type="project" value="TreeGrafter"/>
</dbReference>
<dbReference type="GO" id="GO:0005960">
    <property type="term" value="C:glycine cleavage complex"/>
    <property type="evidence" value="ECO:0007669"/>
    <property type="project" value="TreeGrafter"/>
</dbReference>
<dbReference type="GO" id="GO:0016594">
    <property type="term" value="F:glycine binding"/>
    <property type="evidence" value="ECO:0007669"/>
    <property type="project" value="TreeGrafter"/>
</dbReference>
<dbReference type="GO" id="GO:0004375">
    <property type="term" value="F:glycine dehydrogenase (decarboxylating) activity"/>
    <property type="evidence" value="ECO:0007669"/>
    <property type="project" value="UniProtKB-EC"/>
</dbReference>
<dbReference type="GO" id="GO:0030170">
    <property type="term" value="F:pyridoxal phosphate binding"/>
    <property type="evidence" value="ECO:0007669"/>
    <property type="project" value="TreeGrafter"/>
</dbReference>
<dbReference type="GO" id="GO:0019464">
    <property type="term" value="P:glycine decarboxylation via glycine cleavage system"/>
    <property type="evidence" value="ECO:0007669"/>
    <property type="project" value="UniProtKB-UniRule"/>
</dbReference>
<dbReference type="CDD" id="cd00613">
    <property type="entry name" value="GDC-P"/>
    <property type="match status" value="1"/>
</dbReference>
<dbReference type="FunFam" id="3.40.640.10:FF:000034">
    <property type="entry name" value="Probable glycine dehydrogenase (decarboxylating) subunit 2"/>
    <property type="match status" value="1"/>
</dbReference>
<dbReference type="FunFam" id="3.90.1150.10:FF:000014">
    <property type="entry name" value="Probable glycine dehydrogenase (decarboxylating) subunit 2"/>
    <property type="match status" value="1"/>
</dbReference>
<dbReference type="Gene3D" id="6.20.440.10">
    <property type="match status" value="1"/>
</dbReference>
<dbReference type="Gene3D" id="3.90.1150.10">
    <property type="entry name" value="Aspartate Aminotransferase, domain 1"/>
    <property type="match status" value="1"/>
</dbReference>
<dbReference type="Gene3D" id="3.40.640.10">
    <property type="entry name" value="Type I PLP-dependent aspartate aminotransferase-like (Major domain)"/>
    <property type="match status" value="1"/>
</dbReference>
<dbReference type="HAMAP" id="MF_00713">
    <property type="entry name" value="GcvPB"/>
    <property type="match status" value="1"/>
</dbReference>
<dbReference type="InterPro" id="IPR023012">
    <property type="entry name" value="GcvPB"/>
</dbReference>
<dbReference type="InterPro" id="IPR049316">
    <property type="entry name" value="GDC-P_C"/>
</dbReference>
<dbReference type="InterPro" id="IPR049315">
    <property type="entry name" value="GDC-P_N"/>
</dbReference>
<dbReference type="InterPro" id="IPR020581">
    <property type="entry name" value="GDC_P"/>
</dbReference>
<dbReference type="InterPro" id="IPR015424">
    <property type="entry name" value="PyrdxlP-dep_Trfase"/>
</dbReference>
<dbReference type="InterPro" id="IPR015421">
    <property type="entry name" value="PyrdxlP-dep_Trfase_major"/>
</dbReference>
<dbReference type="InterPro" id="IPR015422">
    <property type="entry name" value="PyrdxlP-dep_Trfase_small"/>
</dbReference>
<dbReference type="NCBIfam" id="NF003346">
    <property type="entry name" value="PRK04366.1"/>
    <property type="match status" value="1"/>
</dbReference>
<dbReference type="PANTHER" id="PTHR11773:SF1">
    <property type="entry name" value="GLYCINE DEHYDROGENASE (DECARBOXYLATING), MITOCHONDRIAL"/>
    <property type="match status" value="1"/>
</dbReference>
<dbReference type="PANTHER" id="PTHR11773">
    <property type="entry name" value="GLYCINE DEHYDROGENASE, DECARBOXYLATING"/>
    <property type="match status" value="1"/>
</dbReference>
<dbReference type="Pfam" id="PF21478">
    <property type="entry name" value="GcvP2_C"/>
    <property type="match status" value="1"/>
</dbReference>
<dbReference type="Pfam" id="PF02347">
    <property type="entry name" value="GDC-P"/>
    <property type="match status" value="1"/>
</dbReference>
<dbReference type="SUPFAM" id="SSF53383">
    <property type="entry name" value="PLP-dependent transferases"/>
    <property type="match status" value="1"/>
</dbReference>
<comment type="function">
    <text evidence="1">The glycine cleavage system catalyzes the degradation of glycine. The P protein binds the alpha-amino group of glycine through its pyridoxal phosphate cofactor; CO(2) is released and the remaining methylamine moiety is then transferred to the lipoamide cofactor of the H protein.</text>
</comment>
<comment type="catalytic activity">
    <reaction evidence="1">
        <text>N(6)-[(R)-lipoyl]-L-lysyl-[glycine-cleavage complex H protein] + glycine + H(+) = N(6)-[(R)-S(8)-aminomethyldihydrolipoyl]-L-lysyl-[glycine-cleavage complex H protein] + CO2</text>
        <dbReference type="Rhea" id="RHEA:24304"/>
        <dbReference type="Rhea" id="RHEA-COMP:10494"/>
        <dbReference type="Rhea" id="RHEA-COMP:10495"/>
        <dbReference type="ChEBI" id="CHEBI:15378"/>
        <dbReference type="ChEBI" id="CHEBI:16526"/>
        <dbReference type="ChEBI" id="CHEBI:57305"/>
        <dbReference type="ChEBI" id="CHEBI:83099"/>
        <dbReference type="ChEBI" id="CHEBI:83143"/>
        <dbReference type="EC" id="1.4.4.2"/>
    </reaction>
</comment>
<comment type="cofactor">
    <cofactor evidence="1">
        <name>pyridoxal 5'-phosphate</name>
        <dbReference type="ChEBI" id="CHEBI:597326"/>
    </cofactor>
</comment>
<comment type="subunit">
    <text evidence="1">The glycine cleavage system is composed of four proteins: P, T, L and H. In this organism, the P 'protein' is a heterodimer of two subunits.</text>
</comment>
<comment type="similarity">
    <text evidence="1">Belongs to the GcvP family. C-terminal subunit subfamily.</text>
</comment>
<sequence>MKNQDQALIFEVSKEGRIGYSLPKLDVEEVKLEDVFESDYIRVEDAELPEVSELDIMRHYTALSNRNHGVDSGFYPLGSCTMKYNPKINESVARFAGFANIHPLQDEETVQGAMELMYDLQEHLIEITGMDTVTLQPAAGAHGEWTGLMLIRAYHEANGDFNRTKVIVPDSAHGTNPASATVAGFETITVKSNEHGLVDLEDLKRVVNEETAALMLTNPNTLGLFEENILEMAEIVHNAGGKLYYDGANLNAVLSQARPGDMGFDVVHLNLHKTFTGPHGGGGPGSGPVGVKADLIPYLPKPILEKTENGYHFNYDRPEAIGRVKPFYGNFGINVRAYTYIRSMGPDGLRAVTEYAVLNANYMMRRLAPFYDLPFDRHCKHEFVLSGRRQKKLGVRTLDIAKRLLDFGYHPPTIYFPLNVEECIMIEPTETESKETLDGFIDKMIQIAKEVEENPEVVQEAPHTTVIKRLDETMAARKPVLRYAKPAPVQV</sequence>
<organism>
    <name type="scientific">Bacillus thuringiensis (strain Al Hakam)</name>
    <dbReference type="NCBI Taxonomy" id="412694"/>
    <lineage>
        <taxon>Bacteria</taxon>
        <taxon>Bacillati</taxon>
        <taxon>Bacillota</taxon>
        <taxon>Bacilli</taxon>
        <taxon>Bacillales</taxon>
        <taxon>Bacillaceae</taxon>
        <taxon>Bacillus</taxon>
        <taxon>Bacillus cereus group</taxon>
    </lineage>
</organism>